<reference key="1">
    <citation type="journal article" date="2005" name="J. Bacteriol.">
        <title>Whole-genome sequence analysis of Pseudomonas syringae pv. phaseolicola 1448A reveals divergence among pathovars in genes involved in virulence and transposition.</title>
        <authorList>
            <person name="Joardar V."/>
            <person name="Lindeberg M."/>
            <person name="Jackson R.W."/>
            <person name="Selengut J."/>
            <person name="Dodson R."/>
            <person name="Brinkac L.M."/>
            <person name="Daugherty S.C."/>
            <person name="DeBoy R.T."/>
            <person name="Durkin A.S."/>
            <person name="Gwinn Giglio M."/>
            <person name="Madupu R."/>
            <person name="Nelson W.C."/>
            <person name="Rosovitz M.J."/>
            <person name="Sullivan S.A."/>
            <person name="Crabtree J."/>
            <person name="Creasy T."/>
            <person name="Davidsen T.M."/>
            <person name="Haft D.H."/>
            <person name="Zafar N."/>
            <person name="Zhou L."/>
            <person name="Halpin R."/>
            <person name="Holley T."/>
            <person name="Khouri H.M."/>
            <person name="Feldblyum T.V."/>
            <person name="White O."/>
            <person name="Fraser C.M."/>
            <person name="Chatterjee A.K."/>
            <person name="Cartinhour S."/>
            <person name="Schneider D."/>
            <person name="Mansfield J.W."/>
            <person name="Collmer A."/>
            <person name="Buell R."/>
        </authorList>
    </citation>
    <scope>NUCLEOTIDE SEQUENCE [LARGE SCALE GENOMIC DNA]</scope>
    <source>
        <strain>1448A / Race 6</strain>
    </source>
</reference>
<feature type="chain" id="PRO_1000062965" description="Thiosulfate sulfurtransferase GlpE">
    <location>
        <begin position="1"/>
        <end position="106"/>
    </location>
</feature>
<feature type="domain" description="Rhodanese" evidence="1">
    <location>
        <begin position="16"/>
        <end position="104"/>
    </location>
</feature>
<feature type="active site" description="Cysteine persulfide intermediate" evidence="1">
    <location>
        <position position="64"/>
    </location>
</feature>
<gene>
    <name evidence="1" type="primary">glpE</name>
    <name type="ordered locus">PSPPH_0630</name>
</gene>
<accession>Q48NU0</accession>
<evidence type="ECO:0000255" key="1">
    <source>
        <dbReference type="HAMAP-Rule" id="MF_01009"/>
    </source>
</evidence>
<proteinExistence type="inferred from homology"/>
<comment type="function">
    <text evidence="1">Transferase that catalyzes the transfer of sulfur from thiosulfate to thiophilic acceptors such as cyanide or dithiols. May function in a CysM-independent thiosulfate assimilation pathway by catalyzing the conversion of thiosulfate to sulfite, which can then be used for L-cysteine biosynthesis.</text>
</comment>
<comment type="catalytic activity">
    <reaction evidence="1">
        <text>thiosulfate + hydrogen cyanide = thiocyanate + sulfite + 2 H(+)</text>
        <dbReference type="Rhea" id="RHEA:16881"/>
        <dbReference type="ChEBI" id="CHEBI:15378"/>
        <dbReference type="ChEBI" id="CHEBI:17359"/>
        <dbReference type="ChEBI" id="CHEBI:18022"/>
        <dbReference type="ChEBI" id="CHEBI:18407"/>
        <dbReference type="ChEBI" id="CHEBI:33542"/>
        <dbReference type="EC" id="2.8.1.1"/>
    </reaction>
</comment>
<comment type="catalytic activity">
    <reaction evidence="1">
        <text>thiosulfate + [thioredoxin]-dithiol = [thioredoxin]-disulfide + hydrogen sulfide + sulfite + 2 H(+)</text>
        <dbReference type="Rhea" id="RHEA:83859"/>
        <dbReference type="Rhea" id="RHEA-COMP:10698"/>
        <dbReference type="Rhea" id="RHEA-COMP:10700"/>
        <dbReference type="ChEBI" id="CHEBI:15378"/>
        <dbReference type="ChEBI" id="CHEBI:17359"/>
        <dbReference type="ChEBI" id="CHEBI:29919"/>
        <dbReference type="ChEBI" id="CHEBI:29950"/>
        <dbReference type="ChEBI" id="CHEBI:33542"/>
        <dbReference type="ChEBI" id="CHEBI:50058"/>
    </reaction>
</comment>
<comment type="subcellular location">
    <subcellularLocation>
        <location evidence="1">Cytoplasm</location>
    </subcellularLocation>
</comment>
<comment type="similarity">
    <text evidence="1">Belongs to the GlpE family.</text>
</comment>
<keyword id="KW-0963">Cytoplasm</keyword>
<keyword id="KW-0808">Transferase</keyword>
<dbReference type="EC" id="2.8.1.1" evidence="1"/>
<dbReference type="EMBL" id="CP000058">
    <property type="protein sequence ID" value="AAZ37352.1"/>
    <property type="molecule type" value="Genomic_DNA"/>
</dbReference>
<dbReference type="RefSeq" id="WP_004660117.1">
    <property type="nucleotide sequence ID" value="NC_005773.3"/>
</dbReference>
<dbReference type="SMR" id="Q48NU0"/>
<dbReference type="GeneID" id="69861670"/>
<dbReference type="KEGG" id="psp:PSPPH_0630"/>
<dbReference type="eggNOG" id="COG0607">
    <property type="taxonomic scope" value="Bacteria"/>
</dbReference>
<dbReference type="HOGENOM" id="CLU_089574_14_0_6"/>
<dbReference type="Proteomes" id="UP000000551">
    <property type="component" value="Chromosome"/>
</dbReference>
<dbReference type="GO" id="GO:0005737">
    <property type="term" value="C:cytoplasm"/>
    <property type="evidence" value="ECO:0007669"/>
    <property type="project" value="UniProtKB-SubCell"/>
</dbReference>
<dbReference type="GO" id="GO:0004792">
    <property type="term" value="F:thiosulfate-cyanide sulfurtransferase activity"/>
    <property type="evidence" value="ECO:0007669"/>
    <property type="project" value="UniProtKB-UniRule"/>
</dbReference>
<dbReference type="GO" id="GO:0006071">
    <property type="term" value="P:glycerol metabolic process"/>
    <property type="evidence" value="ECO:0007669"/>
    <property type="project" value="UniProtKB-UniRule"/>
</dbReference>
<dbReference type="CDD" id="cd01444">
    <property type="entry name" value="GlpE_ST"/>
    <property type="match status" value="1"/>
</dbReference>
<dbReference type="Gene3D" id="3.40.250.10">
    <property type="entry name" value="Rhodanese-like domain"/>
    <property type="match status" value="1"/>
</dbReference>
<dbReference type="HAMAP" id="MF_01009">
    <property type="entry name" value="Thiosulf_sulfurtr"/>
    <property type="match status" value="1"/>
</dbReference>
<dbReference type="InterPro" id="IPR050229">
    <property type="entry name" value="GlpE_sulfurtransferase"/>
</dbReference>
<dbReference type="InterPro" id="IPR001763">
    <property type="entry name" value="Rhodanese-like_dom"/>
</dbReference>
<dbReference type="InterPro" id="IPR036873">
    <property type="entry name" value="Rhodanese-like_dom_sf"/>
</dbReference>
<dbReference type="InterPro" id="IPR023695">
    <property type="entry name" value="Thiosulf_sulfurTrfase"/>
</dbReference>
<dbReference type="NCBIfam" id="NF001195">
    <property type="entry name" value="PRK00162.1"/>
    <property type="match status" value="1"/>
</dbReference>
<dbReference type="PANTHER" id="PTHR43031">
    <property type="entry name" value="FAD-DEPENDENT OXIDOREDUCTASE"/>
    <property type="match status" value="1"/>
</dbReference>
<dbReference type="PANTHER" id="PTHR43031:SF6">
    <property type="entry name" value="THIOSULFATE SULFURTRANSFERASE GLPE"/>
    <property type="match status" value="1"/>
</dbReference>
<dbReference type="Pfam" id="PF00581">
    <property type="entry name" value="Rhodanese"/>
    <property type="match status" value="1"/>
</dbReference>
<dbReference type="SMART" id="SM00450">
    <property type="entry name" value="RHOD"/>
    <property type="match status" value="1"/>
</dbReference>
<dbReference type="SUPFAM" id="SSF52821">
    <property type="entry name" value="Rhodanese/Cell cycle control phosphatase"/>
    <property type="match status" value="1"/>
</dbReference>
<dbReference type="PROSITE" id="PS50206">
    <property type="entry name" value="RHODANESE_3"/>
    <property type="match status" value="1"/>
</dbReference>
<protein>
    <recommendedName>
        <fullName evidence="1">Thiosulfate sulfurtransferase GlpE</fullName>
        <ecNumber evidence="1">2.8.1.1</ecNumber>
    </recommendedName>
</protein>
<sequence>MTEFKRIPPEQAQALREQGAVLVDVRDAQTFQSNHIPDSVHLDNHSIADFIAKADLDKPLVVVCYHGNSSQSAAAYLVGQGFSDVYSVDGGFELWRATYPDETVQG</sequence>
<name>GLPE_PSE14</name>
<organism>
    <name type="scientific">Pseudomonas savastanoi pv. phaseolicola (strain 1448A / Race 6)</name>
    <name type="common">Pseudomonas syringae pv. phaseolicola (strain 1448A / Race 6)</name>
    <dbReference type="NCBI Taxonomy" id="264730"/>
    <lineage>
        <taxon>Bacteria</taxon>
        <taxon>Pseudomonadati</taxon>
        <taxon>Pseudomonadota</taxon>
        <taxon>Gammaproteobacteria</taxon>
        <taxon>Pseudomonadales</taxon>
        <taxon>Pseudomonadaceae</taxon>
        <taxon>Pseudomonas</taxon>
    </lineage>
</organism>